<name>TUPB_CAMJE</name>
<keyword id="KW-0997">Cell inner membrane</keyword>
<keyword id="KW-1003">Cell membrane</keyword>
<keyword id="KW-0472">Membrane</keyword>
<keyword id="KW-1185">Reference proteome</keyword>
<keyword id="KW-0812">Transmembrane</keyword>
<keyword id="KW-1133">Transmembrane helix</keyword>
<keyword id="KW-0813">Transport</keyword>
<comment type="function">
    <text evidence="5">Part of an ABC transporter complex involved in ultra-high affinity tungstate uptake. Probably responsible for the translocation of the substrate across the membrane.</text>
</comment>
<comment type="subunit">
    <text evidence="4">The complex is composed of two ATP-binding proteins (TupC), two transmembrane proteins (TupB) and a solute-binding protein (TupA).</text>
</comment>
<comment type="subcellular location">
    <subcellularLocation>
        <location evidence="4">Cell inner membrane</location>
        <topology evidence="1">Multi-pass membrane protein</topology>
    </subcellularLocation>
</comment>
<comment type="similarity">
    <text evidence="4">Belongs to the binding-protein-dependent transport system permease family.</text>
</comment>
<gene>
    <name evidence="3" type="primary">tupB</name>
    <name evidence="6" type="ordered locus">Cj1539c</name>
</gene>
<dbReference type="EMBL" id="AL111168">
    <property type="protein sequence ID" value="CAL35639.1"/>
    <property type="molecule type" value="Genomic_DNA"/>
</dbReference>
<dbReference type="PIR" id="A81301">
    <property type="entry name" value="A81301"/>
</dbReference>
<dbReference type="RefSeq" id="WP_010891942.1">
    <property type="nucleotide sequence ID" value="NC_002163.1"/>
</dbReference>
<dbReference type="RefSeq" id="YP_002344911.1">
    <property type="nucleotide sequence ID" value="NC_002163.1"/>
</dbReference>
<dbReference type="SMR" id="Q0P886"/>
<dbReference type="STRING" id="192222.Cj1539c"/>
<dbReference type="TCDB" id="3.A.1.6.11">
    <property type="family name" value="the atp-binding cassette (abc) superfamily"/>
</dbReference>
<dbReference type="PaxDb" id="192222-Cj1539c"/>
<dbReference type="EnsemblBacteria" id="CAL35639">
    <property type="protein sequence ID" value="CAL35639"/>
    <property type="gene ID" value="Cj1539c"/>
</dbReference>
<dbReference type="GeneID" id="905821"/>
<dbReference type="KEGG" id="cje:Cj1539c"/>
<dbReference type="PATRIC" id="fig|192222.6.peg.1516"/>
<dbReference type="eggNOG" id="COG4662">
    <property type="taxonomic scope" value="Bacteria"/>
</dbReference>
<dbReference type="HOGENOM" id="CLU_016047_14_2_7"/>
<dbReference type="OrthoDB" id="9781724at2"/>
<dbReference type="Proteomes" id="UP000000799">
    <property type="component" value="Chromosome"/>
</dbReference>
<dbReference type="GO" id="GO:0005886">
    <property type="term" value="C:plasma membrane"/>
    <property type="evidence" value="ECO:0007669"/>
    <property type="project" value="UniProtKB-SubCell"/>
</dbReference>
<dbReference type="GO" id="GO:1901238">
    <property type="term" value="F:ABC-type tungstate transporter activity"/>
    <property type="evidence" value="ECO:0007669"/>
    <property type="project" value="InterPro"/>
</dbReference>
<dbReference type="CDD" id="cd06261">
    <property type="entry name" value="TM_PBP2"/>
    <property type="match status" value="1"/>
</dbReference>
<dbReference type="Gene3D" id="1.10.3720.10">
    <property type="entry name" value="MetI-like"/>
    <property type="match status" value="1"/>
</dbReference>
<dbReference type="InterPro" id="IPR049783">
    <property type="entry name" value="ABC_perm_TupB-like"/>
</dbReference>
<dbReference type="InterPro" id="IPR000515">
    <property type="entry name" value="MetI-like"/>
</dbReference>
<dbReference type="InterPro" id="IPR035906">
    <property type="entry name" value="MetI-like_sf"/>
</dbReference>
<dbReference type="InterPro" id="IPR053776">
    <property type="entry name" value="TupB"/>
</dbReference>
<dbReference type="NCBIfam" id="NF038017">
    <property type="entry name" value="ABC_perm1"/>
    <property type="match status" value="1"/>
</dbReference>
<dbReference type="NCBIfam" id="NF041773">
    <property type="entry name" value="tung_perm_TupB"/>
    <property type="match status" value="1"/>
</dbReference>
<dbReference type="PANTHER" id="PTHR43632">
    <property type="entry name" value="PERMEASE COMPONENT OF TUNGSTATE ABC TRANSPORTER"/>
    <property type="match status" value="1"/>
</dbReference>
<dbReference type="PANTHER" id="PTHR43632:SF1">
    <property type="entry name" value="PERMEASE COMPONENT OF TUNGSTATE ABC TRANSPORTER"/>
    <property type="match status" value="1"/>
</dbReference>
<dbReference type="Pfam" id="PF00528">
    <property type="entry name" value="BPD_transp_1"/>
    <property type="match status" value="1"/>
</dbReference>
<dbReference type="SUPFAM" id="SSF161098">
    <property type="entry name" value="MetI-like"/>
    <property type="match status" value="1"/>
</dbReference>
<dbReference type="PROSITE" id="PS50928">
    <property type="entry name" value="ABC_TM1"/>
    <property type="match status" value="1"/>
</dbReference>
<proteinExistence type="evidence at protein level"/>
<accession>Q0P886</accession>
<reference key="1">
    <citation type="journal article" date="2000" name="Nature">
        <title>The genome sequence of the food-borne pathogen Campylobacter jejuni reveals hypervariable sequences.</title>
        <authorList>
            <person name="Parkhill J."/>
            <person name="Wren B.W."/>
            <person name="Mungall K.L."/>
            <person name="Ketley J.M."/>
            <person name="Churcher C.M."/>
            <person name="Basham D."/>
            <person name="Chillingworth T."/>
            <person name="Davies R.M."/>
            <person name="Feltwell T."/>
            <person name="Holroyd S."/>
            <person name="Jagels K."/>
            <person name="Karlyshev A.V."/>
            <person name="Moule S."/>
            <person name="Pallen M.J."/>
            <person name="Penn C.W."/>
            <person name="Quail M.A."/>
            <person name="Rajandream M.A."/>
            <person name="Rutherford K.M."/>
            <person name="van Vliet A.H.M."/>
            <person name="Whitehead S."/>
            <person name="Barrell B.G."/>
        </authorList>
    </citation>
    <scope>NUCLEOTIDE SEQUENCE [LARGE SCALE GENOMIC DNA]</scope>
    <source>
        <strain>ATCC 700819 / NCTC 11168</strain>
    </source>
</reference>
<reference key="2">
    <citation type="journal article" date="2009" name="Mol. Microbiol.">
        <title>A role for tungsten in the biology of Campylobacter jejuni: tungstate stimulates formate dehydrogenase activity and is transported via an ultra-high affinity ABC system distinct from the molybdate transporter.</title>
        <authorList>
            <person name="Smart J.P."/>
            <person name="Cliff M.J."/>
            <person name="Kelly D.J."/>
        </authorList>
    </citation>
    <scope>PROBABLE FUNCTION IN TUNGSTATE UPTAKE</scope>
    <source>
        <strain>ATCC 700819 / NCTC 11168</strain>
    </source>
</reference>
<protein>
    <recommendedName>
        <fullName evidence="4">Tungstate uptake system permease protein TupB</fullName>
    </recommendedName>
</protein>
<organism>
    <name type="scientific">Campylobacter jejuni subsp. jejuni serotype O:2 (strain ATCC 700819 / NCTC 11168)</name>
    <dbReference type="NCBI Taxonomy" id="192222"/>
    <lineage>
        <taxon>Bacteria</taxon>
        <taxon>Pseudomonadati</taxon>
        <taxon>Campylobacterota</taxon>
        <taxon>Epsilonproteobacteria</taxon>
        <taxon>Campylobacterales</taxon>
        <taxon>Campylobacteraceae</taxon>
        <taxon>Campylobacter</taxon>
    </lineage>
</organism>
<feature type="chain" id="PRO_0000435509" description="Tungstate uptake system permease protein TupB">
    <location>
        <begin position="1"/>
        <end position="239"/>
    </location>
</feature>
<feature type="transmembrane region" description="Helical" evidence="2">
    <location>
        <begin position="45"/>
        <end position="65"/>
    </location>
</feature>
<feature type="transmembrane region" description="Helical" evidence="2">
    <location>
        <begin position="76"/>
        <end position="96"/>
    </location>
</feature>
<feature type="transmembrane region" description="Helical" evidence="2">
    <location>
        <begin position="114"/>
        <end position="134"/>
    </location>
</feature>
<feature type="transmembrane region" description="Helical" evidence="2">
    <location>
        <begin position="168"/>
        <end position="188"/>
    </location>
</feature>
<feature type="transmembrane region" description="Helical" evidence="2">
    <location>
        <begin position="212"/>
        <end position="232"/>
    </location>
</feature>
<feature type="domain" description="ABC transmembrane type-1" evidence="2">
    <location>
        <begin position="37"/>
        <end position="233"/>
    </location>
</feature>
<sequence length="239" mass="26419">MLKLLILKRIFLDYIFDGFKQALFLLFNADESVISAIKTTLLSSSISIVLALLIGFPLGFILGFFEFKLKRFIKLIVDTSLSFPTVAVGLILYALISSRGPLGEFGLLFTIKALILGQFILALPIVIALFSNLIENMNKKHFLLIKSFHLSPLKLVLTMIYELRFALISVVALAYGRIVAEVGVAMIVGGNIKYDTRTITTAISLETNKGEFASGIALALVLILIAFCLNFITHKLKRT</sequence>
<evidence type="ECO:0000255" key="1"/>
<evidence type="ECO:0000255" key="2">
    <source>
        <dbReference type="PROSITE-ProRule" id="PRU00441"/>
    </source>
</evidence>
<evidence type="ECO:0000303" key="3">
    <source>
    </source>
</evidence>
<evidence type="ECO:0000305" key="4"/>
<evidence type="ECO:0000305" key="5">
    <source>
    </source>
</evidence>
<evidence type="ECO:0000312" key="6">
    <source>
        <dbReference type="EMBL" id="CAL35639.1"/>
    </source>
</evidence>